<organism>
    <name type="scientific">Pediococcus pentosaceus (strain ATCC 25745 / CCUG 21536 / LMG 10740 / 183-1w)</name>
    <dbReference type="NCBI Taxonomy" id="278197"/>
    <lineage>
        <taxon>Bacteria</taxon>
        <taxon>Bacillati</taxon>
        <taxon>Bacillota</taxon>
        <taxon>Bacilli</taxon>
        <taxon>Lactobacillales</taxon>
        <taxon>Lactobacillaceae</taxon>
        <taxon>Pediococcus</taxon>
    </lineage>
</organism>
<name>RS7_PEDPA</name>
<accession>Q03EB3</accession>
<comment type="function">
    <text evidence="1">One of the primary rRNA binding proteins, it binds directly to 16S rRNA where it nucleates assembly of the head domain of the 30S subunit. Is located at the subunit interface close to the decoding center, probably blocks exit of the E-site tRNA.</text>
</comment>
<comment type="subunit">
    <text evidence="1">Part of the 30S ribosomal subunit. Contacts proteins S9 and S11.</text>
</comment>
<comment type="similarity">
    <text evidence="1">Belongs to the universal ribosomal protein uS7 family.</text>
</comment>
<evidence type="ECO:0000255" key="1">
    <source>
        <dbReference type="HAMAP-Rule" id="MF_00480"/>
    </source>
</evidence>
<evidence type="ECO:0000305" key="2"/>
<feature type="chain" id="PRO_1000014250" description="Small ribosomal subunit protein uS7">
    <location>
        <begin position="1"/>
        <end position="156"/>
    </location>
</feature>
<reference key="1">
    <citation type="journal article" date="2006" name="Proc. Natl. Acad. Sci. U.S.A.">
        <title>Comparative genomics of the lactic acid bacteria.</title>
        <authorList>
            <person name="Makarova K.S."/>
            <person name="Slesarev A."/>
            <person name="Wolf Y.I."/>
            <person name="Sorokin A."/>
            <person name="Mirkin B."/>
            <person name="Koonin E.V."/>
            <person name="Pavlov A."/>
            <person name="Pavlova N."/>
            <person name="Karamychev V."/>
            <person name="Polouchine N."/>
            <person name="Shakhova V."/>
            <person name="Grigoriev I."/>
            <person name="Lou Y."/>
            <person name="Rohksar D."/>
            <person name="Lucas S."/>
            <person name="Huang K."/>
            <person name="Goodstein D.M."/>
            <person name="Hawkins T."/>
            <person name="Plengvidhya V."/>
            <person name="Welker D."/>
            <person name="Hughes J."/>
            <person name="Goh Y."/>
            <person name="Benson A."/>
            <person name="Baldwin K."/>
            <person name="Lee J.-H."/>
            <person name="Diaz-Muniz I."/>
            <person name="Dosti B."/>
            <person name="Smeianov V."/>
            <person name="Wechter W."/>
            <person name="Barabote R."/>
            <person name="Lorca G."/>
            <person name="Altermann E."/>
            <person name="Barrangou R."/>
            <person name="Ganesan B."/>
            <person name="Xie Y."/>
            <person name="Rawsthorne H."/>
            <person name="Tamir D."/>
            <person name="Parker C."/>
            <person name="Breidt F."/>
            <person name="Broadbent J.R."/>
            <person name="Hutkins R."/>
            <person name="O'Sullivan D."/>
            <person name="Steele J."/>
            <person name="Unlu G."/>
            <person name="Saier M.H. Jr."/>
            <person name="Klaenhammer T."/>
            <person name="Richardson P."/>
            <person name="Kozyavkin S."/>
            <person name="Weimer B.C."/>
            <person name="Mills D.A."/>
        </authorList>
    </citation>
    <scope>NUCLEOTIDE SEQUENCE [LARGE SCALE GENOMIC DNA]</scope>
    <source>
        <strain>ATCC 25745 / CCUG 21536 / LMG 10740 / 183-1w</strain>
    </source>
</reference>
<proteinExistence type="inferred from homology"/>
<dbReference type="EMBL" id="CP000422">
    <property type="protein sequence ID" value="ABJ68459.1"/>
    <property type="molecule type" value="Genomic_DNA"/>
</dbReference>
<dbReference type="RefSeq" id="WP_002833326.1">
    <property type="nucleotide sequence ID" value="NC_008525.1"/>
</dbReference>
<dbReference type="SMR" id="Q03EB3"/>
<dbReference type="STRING" id="278197.PEPE_1421"/>
<dbReference type="GeneID" id="33061511"/>
<dbReference type="KEGG" id="ppe:PEPE_1421"/>
<dbReference type="eggNOG" id="COG0049">
    <property type="taxonomic scope" value="Bacteria"/>
</dbReference>
<dbReference type="HOGENOM" id="CLU_072226_1_1_9"/>
<dbReference type="OrthoDB" id="9807653at2"/>
<dbReference type="Proteomes" id="UP000000773">
    <property type="component" value="Chromosome"/>
</dbReference>
<dbReference type="GO" id="GO:0015935">
    <property type="term" value="C:small ribosomal subunit"/>
    <property type="evidence" value="ECO:0007669"/>
    <property type="project" value="InterPro"/>
</dbReference>
<dbReference type="GO" id="GO:0019843">
    <property type="term" value="F:rRNA binding"/>
    <property type="evidence" value="ECO:0007669"/>
    <property type="project" value="UniProtKB-UniRule"/>
</dbReference>
<dbReference type="GO" id="GO:0003735">
    <property type="term" value="F:structural constituent of ribosome"/>
    <property type="evidence" value="ECO:0007669"/>
    <property type="project" value="InterPro"/>
</dbReference>
<dbReference type="GO" id="GO:0000049">
    <property type="term" value="F:tRNA binding"/>
    <property type="evidence" value="ECO:0007669"/>
    <property type="project" value="UniProtKB-UniRule"/>
</dbReference>
<dbReference type="GO" id="GO:0006412">
    <property type="term" value="P:translation"/>
    <property type="evidence" value="ECO:0007669"/>
    <property type="project" value="UniProtKB-UniRule"/>
</dbReference>
<dbReference type="CDD" id="cd14869">
    <property type="entry name" value="uS7_Bacteria"/>
    <property type="match status" value="1"/>
</dbReference>
<dbReference type="FunFam" id="1.10.455.10:FF:000001">
    <property type="entry name" value="30S ribosomal protein S7"/>
    <property type="match status" value="1"/>
</dbReference>
<dbReference type="Gene3D" id="1.10.455.10">
    <property type="entry name" value="Ribosomal protein S7 domain"/>
    <property type="match status" value="1"/>
</dbReference>
<dbReference type="HAMAP" id="MF_00480_B">
    <property type="entry name" value="Ribosomal_uS7_B"/>
    <property type="match status" value="1"/>
</dbReference>
<dbReference type="InterPro" id="IPR000235">
    <property type="entry name" value="Ribosomal_uS7"/>
</dbReference>
<dbReference type="InterPro" id="IPR005717">
    <property type="entry name" value="Ribosomal_uS7_bac/org-type"/>
</dbReference>
<dbReference type="InterPro" id="IPR020606">
    <property type="entry name" value="Ribosomal_uS7_CS"/>
</dbReference>
<dbReference type="InterPro" id="IPR023798">
    <property type="entry name" value="Ribosomal_uS7_dom"/>
</dbReference>
<dbReference type="InterPro" id="IPR036823">
    <property type="entry name" value="Ribosomal_uS7_dom_sf"/>
</dbReference>
<dbReference type="NCBIfam" id="TIGR01029">
    <property type="entry name" value="rpsG_bact"/>
    <property type="match status" value="1"/>
</dbReference>
<dbReference type="PANTHER" id="PTHR11205">
    <property type="entry name" value="RIBOSOMAL PROTEIN S7"/>
    <property type="match status" value="1"/>
</dbReference>
<dbReference type="Pfam" id="PF00177">
    <property type="entry name" value="Ribosomal_S7"/>
    <property type="match status" value="1"/>
</dbReference>
<dbReference type="PIRSF" id="PIRSF002122">
    <property type="entry name" value="RPS7p_RPS7a_RPS5e_RPS7o"/>
    <property type="match status" value="1"/>
</dbReference>
<dbReference type="SUPFAM" id="SSF47973">
    <property type="entry name" value="Ribosomal protein S7"/>
    <property type="match status" value="1"/>
</dbReference>
<dbReference type="PROSITE" id="PS00052">
    <property type="entry name" value="RIBOSOMAL_S7"/>
    <property type="match status" value="1"/>
</dbReference>
<keyword id="KW-0687">Ribonucleoprotein</keyword>
<keyword id="KW-0689">Ribosomal protein</keyword>
<keyword id="KW-0694">RNA-binding</keyword>
<keyword id="KW-0699">rRNA-binding</keyword>
<keyword id="KW-0820">tRNA-binding</keyword>
<sequence length="156" mass="17873">MPRKGPAPKREVLPDPIYNSKLVTRLINRLMLDGKRGKASKILYNAFDIIEKETGSEPTGVFEEAMNNIMPVLEVKARRVGGSNYQVPIEVRPDRRTTLGLRWLVNYARLRGEHTMPERLAREIMDAANNTGASVKKREDTHKMAEANRAFAHYRW</sequence>
<gene>
    <name evidence="1" type="primary">rpsG</name>
    <name type="ordered locus">PEPE_1421</name>
</gene>
<protein>
    <recommendedName>
        <fullName evidence="1">Small ribosomal subunit protein uS7</fullName>
    </recommendedName>
    <alternativeName>
        <fullName evidence="2">30S ribosomal protein S7</fullName>
    </alternativeName>
</protein>